<proteinExistence type="evidence at protein level"/>
<name>LUXO_VIBC1</name>
<feature type="chain" id="PRO_0000310534" description="Luminescence regulatory protein LuxO">
    <location>
        <begin position="1"/>
        <end position="453"/>
    </location>
</feature>
<feature type="domain" description="Response regulatory" evidence="1">
    <location>
        <begin position="1"/>
        <end position="112"/>
    </location>
</feature>
<feature type="domain" description="Sigma-54 factor interaction" evidence="2">
    <location>
        <begin position="133"/>
        <end position="362"/>
    </location>
</feature>
<feature type="binding site" evidence="2">
    <location>
        <begin position="161"/>
        <end position="168"/>
    </location>
    <ligand>
        <name>ATP</name>
        <dbReference type="ChEBI" id="CHEBI:30616"/>
    </ligand>
</feature>
<feature type="binding site" evidence="2">
    <location>
        <begin position="224"/>
        <end position="233"/>
    </location>
    <ligand>
        <name>ATP</name>
        <dbReference type="ChEBI" id="CHEBI:30616"/>
    </ligand>
</feature>
<feature type="modified residue" description="4-aspartylphosphate" evidence="4">
    <location>
        <position position="47"/>
    </location>
</feature>
<feature type="mutagenesis site" description="Constitutive luminescence." evidence="3">
    <original>D</original>
    <variation>K</variation>
    <location>
        <position position="4"/>
    </location>
</feature>
<feature type="mutagenesis site" description="Constitutive luminescence." evidence="3">
    <original>D</original>
    <variation>A</variation>
    <variation>N</variation>
    <location>
        <position position="47"/>
    </location>
</feature>
<feature type="mutagenesis site" description="Almost no light produced." evidence="3">
    <original>D</original>
    <variation>E</variation>
    <location>
        <position position="47"/>
    </location>
</feature>
<feature type="mutagenesis site" description="Almost no light produced." evidence="3">
    <original>F</original>
    <variation>W</variation>
    <location>
        <position position="94"/>
    </location>
</feature>
<feature type="mutagenesis site" description="Constitutive luminescence." evidence="3">
    <original>K</original>
    <variation>A</variation>
    <location>
        <position position="97"/>
    </location>
</feature>
<comment type="function">
    <text evidence="3">Acts negatively to control the expression of luminescence. At low cell density, LuxO is phosphorylated, and together with sigma-54, causes repression of the luxCDABEGH operon. This repression could be indirect, LuxO could activate a negative regulator of luminescence. At high cell density, LuxO is dephosphorylated and inactive, therefore the luxCDABEGH operon is not repressed and light is emitted. LuxO and sigma-54 have also a role in activating the production of siderophore and in regulating the rugose colony morphology phenotype.</text>
</comment>
<comment type="sequence caution" evidence="4">
    <conflict type="erroneous initiation">
        <sequence resource="EMBL-CDS" id="ABU71912"/>
    </conflict>
</comment>
<protein>
    <recommendedName>
        <fullName>Luminescence regulatory protein LuxO</fullName>
    </recommendedName>
</protein>
<gene>
    <name type="primary">luxO</name>
    <name type="ordered locus">VIBHAR_02959</name>
</gene>
<sequence>MVEDTASVAALYRSYLTPLGIDINIVGTGRDAIESLNHRIPDLILLDLRLPDMTGMDVLHAVKKSHPDVPIIFMTAHGSIDTAVEAMRHGSQDFLIKPCEADRLRVTVNNAIRKATKLKNEADNPGNQNYQGFIGSSQTMQQVYRTIDSAASSKASIFITGESGTGKEVCAEAIHAASKRGDKPFIAINCAAIPKDLIESELFGHVKGAFTGAANDRQGAAELADGGTLFLDELCEMDLDLQTKLLRFIQTGTFQKVGSSKMKSVDVRFVCATNRDPWKEVQEGRFREDLYYRLYVIPLHLPPLRERGKDVIEIAYSLLGYMSHEEGKSFVRFAQDVIERFNSYEWPGNVRQLQNVLRNIVVLNNGKEITLDMLPPPLNQPVVRQSVAKFIEPDIMTVSDIMPLWMTEKMAIEQAIQACEGNIPRAAGYLDVSPSTIYRKLQAWNSKDEKQNV</sequence>
<evidence type="ECO:0000255" key="1">
    <source>
        <dbReference type="PROSITE-ProRule" id="PRU00169"/>
    </source>
</evidence>
<evidence type="ECO:0000255" key="2">
    <source>
        <dbReference type="PROSITE-ProRule" id="PRU00193"/>
    </source>
</evidence>
<evidence type="ECO:0000269" key="3">
    <source>
    </source>
</evidence>
<evidence type="ECO:0000305" key="4"/>
<reference key="1">
    <citation type="submission" date="2007-08" db="EMBL/GenBank/DDBJ databases">
        <authorList>
            <consortium name="The Vibrio harveyi Genome Sequencing Project"/>
            <person name="Bassler B."/>
            <person name="Clifton S.W."/>
            <person name="Fulton L."/>
            <person name="Delehaunty K."/>
            <person name="Fronick C."/>
            <person name="Harrison M."/>
            <person name="Markivic C."/>
            <person name="Fulton R."/>
            <person name="Tin-Wollam A.-M."/>
            <person name="Shah N."/>
            <person name="Pepin K."/>
            <person name="Nash W."/>
            <person name="Thiruvilangam P."/>
            <person name="Bhonagiri V."/>
            <person name="Waters C."/>
            <person name="Tu K.C."/>
            <person name="Irgon J."/>
            <person name="Wilson R.K."/>
        </authorList>
    </citation>
    <scope>NUCLEOTIDE SEQUENCE [LARGE SCALE GENOMIC DNA]</scope>
    <source>
        <strain>ATCC BAA-1116 / BB120</strain>
    </source>
</reference>
<reference key="2">
    <citation type="journal article" date="1999" name="Mol. Microbiol.">
        <title>A genetic analysis of the function of LuxO, a two-component response regulator involved in quorum sensing in Vibrio harveyi.</title>
        <authorList>
            <person name="Freeman J.A."/>
            <person name="Bassler B.L."/>
        </authorList>
    </citation>
    <scope>FUNCTION</scope>
    <scope>MUTAGENESIS OF ASP-4; ASP-47; PHE-94 AND LYS-97</scope>
</reference>
<reference key="3">
    <citation type="journal article" date="2000" name="Mol. Microbiol.">
        <title>Regulation of quorum sensing in Vibrio harveyi by LuxO and sigma-54.</title>
        <authorList>
            <person name="Lilley B.N."/>
            <person name="Bassler B.L."/>
        </authorList>
    </citation>
    <scope>INTERACTION WITH SIGMA-54</scope>
</reference>
<dbReference type="EMBL" id="CP000789">
    <property type="protein sequence ID" value="ABU71912.1"/>
    <property type="status" value="ALT_INIT"/>
    <property type="molecule type" value="Genomic_DNA"/>
</dbReference>
<dbReference type="RefSeq" id="WP_012128494.1">
    <property type="nucleotide sequence ID" value="NC_022269.1"/>
</dbReference>
<dbReference type="SMR" id="A7MVC2"/>
<dbReference type="KEGG" id="vha:VIBHAR_02959"/>
<dbReference type="PATRIC" id="fig|338187.36.peg.2888"/>
<dbReference type="Proteomes" id="UP000008152">
    <property type="component" value="Chromosome I"/>
</dbReference>
<dbReference type="CollecTF" id="EXPREG_00000270"/>
<dbReference type="GO" id="GO:0005524">
    <property type="term" value="F:ATP binding"/>
    <property type="evidence" value="ECO:0007669"/>
    <property type="project" value="UniProtKB-KW"/>
</dbReference>
<dbReference type="GO" id="GO:0016887">
    <property type="term" value="F:ATP hydrolysis activity"/>
    <property type="evidence" value="ECO:0007669"/>
    <property type="project" value="InterPro"/>
</dbReference>
<dbReference type="GO" id="GO:0043565">
    <property type="term" value="F:sequence-specific DNA binding"/>
    <property type="evidence" value="ECO:0007669"/>
    <property type="project" value="InterPro"/>
</dbReference>
<dbReference type="GO" id="GO:0000160">
    <property type="term" value="P:phosphorelay signal transduction system"/>
    <property type="evidence" value="ECO:0007669"/>
    <property type="project" value="UniProtKB-KW"/>
</dbReference>
<dbReference type="GO" id="GO:0045893">
    <property type="term" value="P:positive regulation of DNA-templated transcription"/>
    <property type="evidence" value="ECO:0000269"/>
    <property type="project" value="CollecTF"/>
</dbReference>
<dbReference type="CDD" id="cd00009">
    <property type="entry name" value="AAA"/>
    <property type="match status" value="1"/>
</dbReference>
<dbReference type="CDD" id="cd17572">
    <property type="entry name" value="REC_NtrC1-like"/>
    <property type="match status" value="1"/>
</dbReference>
<dbReference type="FunFam" id="3.40.50.300:FF:000006">
    <property type="entry name" value="DNA-binding transcriptional regulator NtrC"/>
    <property type="match status" value="1"/>
</dbReference>
<dbReference type="FunFam" id="1.10.10.60:FF:000343">
    <property type="entry name" value="Sigma-54-dependent Fis family transcriptional regulator"/>
    <property type="match status" value="1"/>
</dbReference>
<dbReference type="FunFam" id="1.10.8.60:FF:000120">
    <property type="entry name" value="Sigma-54-dependent Fis family transcriptional regulator"/>
    <property type="match status" value="1"/>
</dbReference>
<dbReference type="FunFam" id="3.40.50.2300:FF:000225">
    <property type="entry name" value="Sigma-54-dependent Fis family transcriptional regulator"/>
    <property type="match status" value="1"/>
</dbReference>
<dbReference type="Gene3D" id="1.10.8.60">
    <property type="match status" value="1"/>
</dbReference>
<dbReference type="Gene3D" id="3.40.50.2300">
    <property type="match status" value="1"/>
</dbReference>
<dbReference type="Gene3D" id="1.10.10.60">
    <property type="entry name" value="Homeodomain-like"/>
    <property type="match status" value="1"/>
</dbReference>
<dbReference type="Gene3D" id="3.40.50.300">
    <property type="entry name" value="P-loop containing nucleotide triphosphate hydrolases"/>
    <property type="match status" value="1"/>
</dbReference>
<dbReference type="InterPro" id="IPR003593">
    <property type="entry name" value="AAA+_ATPase"/>
</dbReference>
<dbReference type="InterPro" id="IPR011006">
    <property type="entry name" value="CheY-like_superfamily"/>
</dbReference>
<dbReference type="InterPro" id="IPR009057">
    <property type="entry name" value="Homeodomain-like_sf"/>
</dbReference>
<dbReference type="InterPro" id="IPR002197">
    <property type="entry name" value="HTH_Fis"/>
</dbReference>
<dbReference type="InterPro" id="IPR027417">
    <property type="entry name" value="P-loop_NTPase"/>
</dbReference>
<dbReference type="InterPro" id="IPR053402">
    <property type="entry name" value="QS_regulatory_LuxO"/>
</dbReference>
<dbReference type="InterPro" id="IPR001789">
    <property type="entry name" value="Sig_transdc_resp-reg_receiver"/>
</dbReference>
<dbReference type="InterPro" id="IPR002078">
    <property type="entry name" value="Sigma_54_int"/>
</dbReference>
<dbReference type="InterPro" id="IPR025943">
    <property type="entry name" value="Sigma_54_int_dom_ATP-bd_2"/>
</dbReference>
<dbReference type="InterPro" id="IPR025944">
    <property type="entry name" value="Sigma_54_int_dom_CS"/>
</dbReference>
<dbReference type="NCBIfam" id="NF041946">
    <property type="entry name" value="LuxO_transreg_Vib"/>
    <property type="match status" value="1"/>
</dbReference>
<dbReference type="PANTHER" id="PTHR32071:SF117">
    <property type="entry name" value="PTS-DEPENDENT DIHYDROXYACETONE KINASE OPERON REGULATORY PROTEIN-RELATED"/>
    <property type="match status" value="1"/>
</dbReference>
<dbReference type="PANTHER" id="PTHR32071">
    <property type="entry name" value="TRANSCRIPTIONAL REGULATORY PROTEIN"/>
    <property type="match status" value="1"/>
</dbReference>
<dbReference type="Pfam" id="PF02954">
    <property type="entry name" value="HTH_8"/>
    <property type="match status" value="1"/>
</dbReference>
<dbReference type="Pfam" id="PF00072">
    <property type="entry name" value="Response_reg"/>
    <property type="match status" value="1"/>
</dbReference>
<dbReference type="Pfam" id="PF00158">
    <property type="entry name" value="Sigma54_activat"/>
    <property type="match status" value="1"/>
</dbReference>
<dbReference type="SMART" id="SM00382">
    <property type="entry name" value="AAA"/>
    <property type="match status" value="1"/>
</dbReference>
<dbReference type="SMART" id="SM00448">
    <property type="entry name" value="REC"/>
    <property type="match status" value="1"/>
</dbReference>
<dbReference type="SUPFAM" id="SSF52172">
    <property type="entry name" value="CheY-like"/>
    <property type="match status" value="1"/>
</dbReference>
<dbReference type="SUPFAM" id="SSF46689">
    <property type="entry name" value="Homeodomain-like"/>
    <property type="match status" value="1"/>
</dbReference>
<dbReference type="SUPFAM" id="SSF52540">
    <property type="entry name" value="P-loop containing nucleoside triphosphate hydrolases"/>
    <property type="match status" value="1"/>
</dbReference>
<dbReference type="PROSITE" id="PS50110">
    <property type="entry name" value="RESPONSE_REGULATORY"/>
    <property type="match status" value="1"/>
</dbReference>
<dbReference type="PROSITE" id="PS00676">
    <property type="entry name" value="SIGMA54_INTERACT_2"/>
    <property type="match status" value="1"/>
</dbReference>
<dbReference type="PROSITE" id="PS00688">
    <property type="entry name" value="SIGMA54_INTERACT_3"/>
    <property type="match status" value="1"/>
</dbReference>
<dbReference type="PROSITE" id="PS50045">
    <property type="entry name" value="SIGMA54_INTERACT_4"/>
    <property type="match status" value="1"/>
</dbReference>
<organism>
    <name type="scientific">Vibrio campbellii (strain ATCC BAA-1116)</name>
    <dbReference type="NCBI Taxonomy" id="2902295"/>
    <lineage>
        <taxon>Bacteria</taxon>
        <taxon>Pseudomonadati</taxon>
        <taxon>Pseudomonadota</taxon>
        <taxon>Gammaproteobacteria</taxon>
        <taxon>Vibrionales</taxon>
        <taxon>Vibrionaceae</taxon>
        <taxon>Vibrio</taxon>
    </lineage>
</organism>
<accession>A7MVC2</accession>
<accession>P54299</accession>
<keyword id="KW-0067">ATP-binding</keyword>
<keyword id="KW-0238">DNA-binding</keyword>
<keyword id="KW-0547">Nucleotide-binding</keyword>
<keyword id="KW-0597">Phosphoprotein</keyword>
<keyword id="KW-0678">Repressor</keyword>
<keyword id="KW-0804">Transcription</keyword>
<keyword id="KW-0805">Transcription regulation</keyword>
<keyword id="KW-0902">Two-component regulatory system</keyword>